<gene>
    <name type="ordered locus">MT1457</name>
</gene>
<protein>
    <recommendedName>
        <fullName>Uncharacterized protein MT1457</fullName>
    </recommendedName>
</protein>
<name>Y1414_MYCTO</name>
<reference key="1">
    <citation type="journal article" date="2002" name="J. Bacteriol.">
        <title>Whole-genome comparison of Mycobacterium tuberculosis clinical and laboratory strains.</title>
        <authorList>
            <person name="Fleischmann R.D."/>
            <person name="Alland D."/>
            <person name="Eisen J.A."/>
            <person name="Carpenter L."/>
            <person name="White O."/>
            <person name="Peterson J.D."/>
            <person name="DeBoy R.T."/>
            <person name="Dodson R.J."/>
            <person name="Gwinn M.L."/>
            <person name="Haft D.H."/>
            <person name="Hickey E.K."/>
            <person name="Kolonay J.F."/>
            <person name="Nelson W.C."/>
            <person name="Umayam L.A."/>
            <person name="Ermolaeva M.D."/>
            <person name="Salzberg S.L."/>
            <person name="Delcher A."/>
            <person name="Utterback T.R."/>
            <person name="Weidman J.F."/>
            <person name="Khouri H.M."/>
            <person name="Gill J."/>
            <person name="Mikula A."/>
            <person name="Bishai W."/>
            <person name="Jacobs W.R. Jr."/>
            <person name="Venter J.C."/>
            <person name="Fraser C.M."/>
        </authorList>
    </citation>
    <scope>NUCLEOTIDE SEQUENCE [LARGE SCALE GENOMIC DNA]</scope>
    <source>
        <strain>CDC 1551 / Oshkosh</strain>
    </source>
</reference>
<accession>P9WLY2</accession>
<accession>L0T9K2</accession>
<accession>P64845</accession>
<accession>P71683</accession>
<feature type="chain" id="PRO_0000427399" description="Uncharacterized protein MT1457">
    <location>
        <begin position="1"/>
        <end position="133"/>
    </location>
</feature>
<comment type="sequence caution" evidence="1">
    <conflict type="erroneous initiation">
        <sequence resource="EMBL-CDS" id="AAK45722"/>
    </conflict>
</comment>
<proteinExistence type="predicted"/>
<sequence length="133" mass="14330">MLGDAQQLELGRCAPADIALTVAATVVSRQDCRSGLRRIVLDCGSKILGSDRPAWATGFGRLIDHADARIAALSEHHATVVWPDDAPLPPVGTRLRVIPNHVCLTTNLVDDVAVVRDATLIDRWKVAARGKNH</sequence>
<organism>
    <name type="scientific">Mycobacterium tuberculosis (strain CDC 1551 / Oshkosh)</name>
    <dbReference type="NCBI Taxonomy" id="83331"/>
    <lineage>
        <taxon>Bacteria</taxon>
        <taxon>Bacillati</taxon>
        <taxon>Actinomycetota</taxon>
        <taxon>Actinomycetes</taxon>
        <taxon>Mycobacteriales</taxon>
        <taxon>Mycobacteriaceae</taxon>
        <taxon>Mycobacterium</taxon>
        <taxon>Mycobacterium tuberculosis complex</taxon>
    </lineage>
</organism>
<dbReference type="EMBL" id="AE000516">
    <property type="protein sequence ID" value="AAK45722.1"/>
    <property type="status" value="ALT_INIT"/>
    <property type="molecule type" value="Genomic_DNA"/>
</dbReference>
<dbReference type="PIR" id="C70902">
    <property type="entry name" value="C70902"/>
</dbReference>
<dbReference type="SMR" id="P9WLY2"/>
<dbReference type="KEGG" id="mtc:MT1457"/>
<dbReference type="PATRIC" id="fig|83331.31.peg.1566"/>
<dbReference type="HOGENOM" id="CLU_1085128_0_0_11"/>
<dbReference type="Proteomes" id="UP000001020">
    <property type="component" value="Chromosome"/>
</dbReference>
<dbReference type="GO" id="GO:0008721">
    <property type="term" value="F:D-serine ammonia-lyase activity"/>
    <property type="evidence" value="ECO:0007669"/>
    <property type="project" value="TreeGrafter"/>
</dbReference>
<dbReference type="GO" id="GO:0036088">
    <property type="term" value="P:D-serine catabolic process"/>
    <property type="evidence" value="ECO:0007669"/>
    <property type="project" value="TreeGrafter"/>
</dbReference>
<dbReference type="Gene3D" id="2.40.37.20">
    <property type="entry name" value="D-serine dehydratase-like domain"/>
    <property type="match status" value="1"/>
</dbReference>
<dbReference type="InterPro" id="IPR051466">
    <property type="entry name" value="D-amino_acid_metab_enzyme"/>
</dbReference>
<dbReference type="InterPro" id="IPR026956">
    <property type="entry name" value="D-ser_dehydrat-like_dom"/>
</dbReference>
<dbReference type="InterPro" id="IPR042208">
    <property type="entry name" value="D-ser_dehydrat-like_sf"/>
</dbReference>
<dbReference type="PANTHER" id="PTHR28004:SF2">
    <property type="entry name" value="D-SERINE DEHYDRATASE"/>
    <property type="match status" value="1"/>
</dbReference>
<dbReference type="PANTHER" id="PTHR28004">
    <property type="entry name" value="ZGC:162816-RELATED"/>
    <property type="match status" value="1"/>
</dbReference>
<dbReference type="Pfam" id="PF14031">
    <property type="entry name" value="D-ser_dehydrat"/>
    <property type="match status" value="1"/>
</dbReference>
<dbReference type="SMART" id="SM01119">
    <property type="entry name" value="D-ser_dehydrat"/>
    <property type="match status" value="1"/>
</dbReference>
<evidence type="ECO:0000305" key="1"/>
<keyword id="KW-1185">Reference proteome</keyword>